<proteinExistence type="inferred from homology"/>
<gene>
    <name evidence="1" type="primary">psbM</name>
</gene>
<accession>Q2PMT7</accession>
<protein>
    <recommendedName>
        <fullName evidence="1">Photosystem II reaction center protein M</fullName>
        <shortName evidence="1">PSII-M</shortName>
    </recommendedName>
</protein>
<comment type="function">
    <text evidence="1">One of the components of the core complex of photosystem II (PSII). PSII is a light-driven water:plastoquinone oxidoreductase that uses light energy to abstract electrons from H(2)O, generating O(2) and a proton gradient subsequently used for ATP formation. It consists of a core antenna complex that captures photons, and an electron transfer chain that converts photonic excitation into a charge separation. This subunit is found at the monomer-monomer interface.</text>
</comment>
<comment type="subunit">
    <text evidence="1">PSII is composed of 1 copy each of membrane proteins PsbA, PsbB, PsbC, PsbD, PsbE, PsbF, PsbH, PsbI, PsbJ, PsbK, PsbL, PsbM, PsbT, PsbX, PsbY, PsbZ, Psb30/Ycf12, at least 3 peripheral proteins of the oxygen-evolving complex and a large number of cofactors. It forms dimeric complexes.</text>
</comment>
<comment type="subcellular location">
    <subcellularLocation>
        <location evidence="1">Plastid</location>
        <location evidence="1">Chloroplast thylakoid membrane</location>
        <topology evidence="1">Single-pass membrane protein</topology>
    </subcellularLocation>
</comment>
<comment type="similarity">
    <text evidence="1">Belongs to the PsbM family.</text>
</comment>
<reference key="1">
    <citation type="journal article" date="2005" name="Plant Mol. Biol.">
        <title>Complete chloroplast genome sequence of Glycine max and comparative analyses with other legume genomes.</title>
        <authorList>
            <person name="Saski C."/>
            <person name="Lee S.-B."/>
            <person name="Daniell H."/>
            <person name="Wood T.C."/>
            <person name="Tomkins J."/>
            <person name="Kim H.-G."/>
            <person name="Jansen R.K."/>
        </authorList>
    </citation>
    <scope>NUCLEOTIDE SEQUENCE [LARGE SCALE GENOMIC DNA]</scope>
    <source>
        <strain>cv. PI 437654</strain>
    </source>
</reference>
<sequence length="34" mass="3756">MEVNILAFIATALFILVPTAFLLIIYVKTVSQSD</sequence>
<keyword id="KW-0150">Chloroplast</keyword>
<keyword id="KW-0472">Membrane</keyword>
<keyword id="KW-0602">Photosynthesis</keyword>
<keyword id="KW-0604">Photosystem II</keyword>
<keyword id="KW-0934">Plastid</keyword>
<keyword id="KW-0674">Reaction center</keyword>
<keyword id="KW-1185">Reference proteome</keyword>
<keyword id="KW-0793">Thylakoid</keyword>
<keyword id="KW-0812">Transmembrane</keyword>
<keyword id="KW-1133">Transmembrane helix</keyword>
<name>PSBM_SOYBN</name>
<feature type="chain" id="PRO_0000276239" description="Photosystem II reaction center protein M">
    <location>
        <begin position="1"/>
        <end position="34"/>
    </location>
</feature>
<feature type="transmembrane region" description="Helical" evidence="1">
    <location>
        <begin position="5"/>
        <end position="25"/>
    </location>
</feature>
<dbReference type="EMBL" id="DQ317523">
    <property type="protein sequence ID" value="ABC25121.1"/>
    <property type="molecule type" value="Genomic_DNA"/>
</dbReference>
<dbReference type="RefSeq" id="YP_538761.1">
    <property type="nucleotide sequence ID" value="NC_007942.1"/>
</dbReference>
<dbReference type="SMR" id="Q2PMT7"/>
<dbReference type="FunCoup" id="Q2PMT7">
    <property type="interactions" value="50"/>
</dbReference>
<dbReference type="STRING" id="3847.Q2PMT7"/>
<dbReference type="PaxDb" id="3847-GLYMA18G48541.1"/>
<dbReference type="EnsemblPlants" id="KRH12965">
    <property type="protein sequence ID" value="KRH12965"/>
    <property type="gene ID" value="GLYMA_15G208300"/>
</dbReference>
<dbReference type="GeneID" id="3989288"/>
<dbReference type="Gramene" id="KRH12965">
    <property type="protein sequence ID" value="KRH12965"/>
    <property type="gene ID" value="GLYMA_15G208300"/>
</dbReference>
<dbReference type="KEGG" id="gmx:3989288"/>
<dbReference type="eggNOG" id="ENOG502SD7U">
    <property type="taxonomic scope" value="Eukaryota"/>
</dbReference>
<dbReference type="InParanoid" id="Q2PMT7"/>
<dbReference type="OrthoDB" id="564131at2759"/>
<dbReference type="Proteomes" id="UP000008827">
    <property type="component" value="Chloroplast"/>
</dbReference>
<dbReference type="GO" id="GO:0009535">
    <property type="term" value="C:chloroplast thylakoid membrane"/>
    <property type="evidence" value="ECO:0007669"/>
    <property type="project" value="UniProtKB-SubCell"/>
</dbReference>
<dbReference type="GO" id="GO:0009523">
    <property type="term" value="C:photosystem II"/>
    <property type="evidence" value="ECO:0007669"/>
    <property type="project" value="UniProtKB-KW"/>
</dbReference>
<dbReference type="GO" id="GO:0019684">
    <property type="term" value="P:photosynthesis, light reaction"/>
    <property type="evidence" value="ECO:0007669"/>
    <property type="project" value="InterPro"/>
</dbReference>
<dbReference type="HAMAP" id="MF_00438">
    <property type="entry name" value="PSII_PsbM"/>
    <property type="match status" value="1"/>
</dbReference>
<dbReference type="InterPro" id="IPR007826">
    <property type="entry name" value="PSII_PsbM"/>
</dbReference>
<dbReference type="InterPro" id="IPR037269">
    <property type="entry name" value="PSII_PsbM_sf"/>
</dbReference>
<dbReference type="NCBIfam" id="TIGR03038">
    <property type="entry name" value="PS_II_psbM"/>
    <property type="match status" value="1"/>
</dbReference>
<dbReference type="PANTHER" id="PTHR35774">
    <property type="entry name" value="PHOTOSYSTEM II REACTION CENTER PROTEIN M"/>
    <property type="match status" value="1"/>
</dbReference>
<dbReference type="PANTHER" id="PTHR35774:SF1">
    <property type="entry name" value="PHOTOSYSTEM II REACTION CENTER PROTEIN M"/>
    <property type="match status" value="1"/>
</dbReference>
<dbReference type="Pfam" id="PF05151">
    <property type="entry name" value="PsbM"/>
    <property type="match status" value="1"/>
</dbReference>
<dbReference type="SUPFAM" id="SSF161033">
    <property type="entry name" value="Photosystem II reaction center protein M, PsbM"/>
    <property type="match status" value="1"/>
</dbReference>
<evidence type="ECO:0000255" key="1">
    <source>
        <dbReference type="HAMAP-Rule" id="MF_00438"/>
    </source>
</evidence>
<geneLocation type="chloroplast"/>
<organism>
    <name type="scientific">Glycine max</name>
    <name type="common">Soybean</name>
    <name type="synonym">Glycine hispida</name>
    <dbReference type="NCBI Taxonomy" id="3847"/>
    <lineage>
        <taxon>Eukaryota</taxon>
        <taxon>Viridiplantae</taxon>
        <taxon>Streptophyta</taxon>
        <taxon>Embryophyta</taxon>
        <taxon>Tracheophyta</taxon>
        <taxon>Spermatophyta</taxon>
        <taxon>Magnoliopsida</taxon>
        <taxon>eudicotyledons</taxon>
        <taxon>Gunneridae</taxon>
        <taxon>Pentapetalae</taxon>
        <taxon>rosids</taxon>
        <taxon>fabids</taxon>
        <taxon>Fabales</taxon>
        <taxon>Fabaceae</taxon>
        <taxon>Papilionoideae</taxon>
        <taxon>50 kb inversion clade</taxon>
        <taxon>NPAAA clade</taxon>
        <taxon>indigoferoid/millettioid clade</taxon>
        <taxon>Phaseoleae</taxon>
        <taxon>Glycine</taxon>
        <taxon>Glycine subgen. Soja</taxon>
    </lineage>
</organism>